<protein>
    <recommendedName>
        <fullName evidence="2">Sensory histidine kinase/phosphatase NtrB</fullName>
        <ecNumber evidence="2">2.7.13.3</ecNumber>
        <ecNumber evidence="2">3.1.3.-</ecNumber>
    </recommendedName>
    <alternativeName>
        <fullName evidence="2">Nitrogen regulation protein NR(II)</fullName>
    </alternativeName>
    <alternativeName>
        <fullName evidence="2">Nitrogen regulator II</fullName>
        <shortName evidence="2">NRII</shortName>
    </alternativeName>
</protein>
<proteinExistence type="inferred from homology"/>
<evidence type="ECO:0000250" key="1"/>
<evidence type="ECO:0000250" key="2">
    <source>
        <dbReference type="UniProtKB" id="P0AFB5"/>
    </source>
</evidence>
<evidence type="ECO:0000255" key="3">
    <source>
        <dbReference type="PROSITE-ProRule" id="PRU00107"/>
    </source>
</evidence>
<feature type="chain" id="PRO_0000074826" description="Sensory histidine kinase/phosphatase NtrB">
    <location>
        <begin position="1"/>
        <end position="348"/>
    </location>
</feature>
<feature type="domain" description="PAS">
    <location>
        <begin position="5"/>
        <end position="78"/>
    </location>
</feature>
<feature type="domain" description="Histidine kinase" evidence="3">
    <location>
        <begin position="136"/>
        <end position="348"/>
    </location>
</feature>
<feature type="binding site" evidence="1">
    <location>
        <position position="329"/>
    </location>
    <ligand>
        <name>ATP</name>
        <dbReference type="ChEBI" id="CHEBI:30616"/>
    </ligand>
</feature>
<feature type="modified residue" description="Phosphohistidine; by autocatalysis" evidence="3">
    <location>
        <position position="139"/>
    </location>
</feature>
<accession>P28788</accession>
<dbReference type="EC" id="2.7.13.3" evidence="2"/>
<dbReference type="EC" id="3.1.3.-" evidence="2"/>
<dbReference type="EMBL" id="X68129">
    <property type="protein sequence ID" value="CAA48235.1"/>
    <property type="molecule type" value="Genomic_DNA"/>
</dbReference>
<dbReference type="PIR" id="S23900">
    <property type="entry name" value="S23900"/>
</dbReference>
<dbReference type="SMR" id="P28788"/>
<dbReference type="STRING" id="1354271.M997_0111"/>
<dbReference type="BRENDA" id="2.7.13.3">
    <property type="organism ID" value="14542"/>
</dbReference>
<dbReference type="GO" id="GO:0005737">
    <property type="term" value="C:cytoplasm"/>
    <property type="evidence" value="ECO:0007669"/>
    <property type="project" value="UniProtKB-SubCell"/>
</dbReference>
<dbReference type="GO" id="GO:0005524">
    <property type="term" value="F:ATP binding"/>
    <property type="evidence" value="ECO:0007669"/>
    <property type="project" value="UniProtKB-KW"/>
</dbReference>
<dbReference type="GO" id="GO:0016787">
    <property type="term" value="F:hydrolase activity"/>
    <property type="evidence" value="ECO:0007669"/>
    <property type="project" value="UniProtKB-KW"/>
</dbReference>
<dbReference type="GO" id="GO:0000155">
    <property type="term" value="F:phosphorelay sensor kinase activity"/>
    <property type="evidence" value="ECO:0007669"/>
    <property type="project" value="InterPro"/>
</dbReference>
<dbReference type="GO" id="GO:0009399">
    <property type="term" value="P:nitrogen fixation"/>
    <property type="evidence" value="ECO:0007669"/>
    <property type="project" value="UniProtKB-KW"/>
</dbReference>
<dbReference type="GO" id="GO:0006355">
    <property type="term" value="P:regulation of DNA-templated transcription"/>
    <property type="evidence" value="ECO:0007669"/>
    <property type="project" value="InterPro"/>
</dbReference>
<dbReference type="CDD" id="cd16918">
    <property type="entry name" value="HATPase_Glnl-NtrB-like"/>
    <property type="match status" value="1"/>
</dbReference>
<dbReference type="CDD" id="cd00082">
    <property type="entry name" value="HisKA"/>
    <property type="match status" value="1"/>
</dbReference>
<dbReference type="CDD" id="cd00130">
    <property type="entry name" value="PAS"/>
    <property type="match status" value="1"/>
</dbReference>
<dbReference type="FunFam" id="1.10.287.130:FF:000005">
    <property type="entry name" value="Nitrogen regulation histidine kinase"/>
    <property type="match status" value="1"/>
</dbReference>
<dbReference type="FunFam" id="3.30.565.10:FF:000008">
    <property type="entry name" value="Nitrogen regulation histidine kinase"/>
    <property type="match status" value="1"/>
</dbReference>
<dbReference type="Gene3D" id="1.10.287.130">
    <property type="match status" value="1"/>
</dbReference>
<dbReference type="Gene3D" id="3.30.565.10">
    <property type="entry name" value="Histidine kinase-like ATPase, C-terminal domain"/>
    <property type="match status" value="1"/>
</dbReference>
<dbReference type="Gene3D" id="3.30.450.20">
    <property type="entry name" value="PAS domain"/>
    <property type="match status" value="1"/>
</dbReference>
<dbReference type="InterPro" id="IPR036890">
    <property type="entry name" value="HATPase_C_sf"/>
</dbReference>
<dbReference type="InterPro" id="IPR005467">
    <property type="entry name" value="His_kinase_dom"/>
</dbReference>
<dbReference type="InterPro" id="IPR003661">
    <property type="entry name" value="HisK_dim/P_dom"/>
</dbReference>
<dbReference type="InterPro" id="IPR036097">
    <property type="entry name" value="HisK_dim/P_sf"/>
</dbReference>
<dbReference type="InterPro" id="IPR000014">
    <property type="entry name" value="PAS"/>
</dbReference>
<dbReference type="InterPro" id="IPR035965">
    <property type="entry name" value="PAS-like_dom_sf"/>
</dbReference>
<dbReference type="InterPro" id="IPR013767">
    <property type="entry name" value="PAS_fold"/>
</dbReference>
<dbReference type="InterPro" id="IPR004358">
    <property type="entry name" value="Sig_transdc_His_kin-like_C"/>
</dbReference>
<dbReference type="NCBIfam" id="NF008293">
    <property type="entry name" value="PRK11073.1"/>
    <property type="match status" value="1"/>
</dbReference>
<dbReference type="PANTHER" id="PTHR43065">
    <property type="entry name" value="SENSOR HISTIDINE KINASE"/>
    <property type="match status" value="1"/>
</dbReference>
<dbReference type="PANTHER" id="PTHR43065:SF16">
    <property type="entry name" value="SENSORY HISTIDINE KINASE_PHOSPHATASE NTRB"/>
    <property type="match status" value="1"/>
</dbReference>
<dbReference type="Pfam" id="PF02518">
    <property type="entry name" value="HATPase_c"/>
    <property type="match status" value="1"/>
</dbReference>
<dbReference type="Pfam" id="PF00512">
    <property type="entry name" value="HisKA"/>
    <property type="match status" value="1"/>
</dbReference>
<dbReference type="Pfam" id="PF00989">
    <property type="entry name" value="PAS"/>
    <property type="match status" value="1"/>
</dbReference>
<dbReference type="PRINTS" id="PR00344">
    <property type="entry name" value="BCTRLSENSOR"/>
</dbReference>
<dbReference type="SMART" id="SM00387">
    <property type="entry name" value="HATPase_c"/>
    <property type="match status" value="1"/>
</dbReference>
<dbReference type="SMART" id="SM00388">
    <property type="entry name" value="HisKA"/>
    <property type="match status" value="1"/>
</dbReference>
<dbReference type="SMART" id="SM00091">
    <property type="entry name" value="PAS"/>
    <property type="match status" value="1"/>
</dbReference>
<dbReference type="SUPFAM" id="SSF55874">
    <property type="entry name" value="ATPase domain of HSP90 chaperone/DNA topoisomerase II/histidine kinase"/>
    <property type="match status" value="1"/>
</dbReference>
<dbReference type="SUPFAM" id="SSF47384">
    <property type="entry name" value="Homodimeric domain of signal transducing histidine kinase"/>
    <property type="match status" value="1"/>
</dbReference>
<dbReference type="SUPFAM" id="SSF55785">
    <property type="entry name" value="PYP-like sensor domain (PAS domain)"/>
    <property type="match status" value="1"/>
</dbReference>
<dbReference type="PROSITE" id="PS50109">
    <property type="entry name" value="HIS_KIN"/>
    <property type="match status" value="1"/>
</dbReference>
<organism>
    <name type="scientific">Proteus hauseri</name>
    <dbReference type="NCBI Taxonomy" id="183417"/>
    <lineage>
        <taxon>Bacteria</taxon>
        <taxon>Pseudomonadati</taxon>
        <taxon>Pseudomonadota</taxon>
        <taxon>Gammaproteobacteria</taxon>
        <taxon>Enterobacterales</taxon>
        <taxon>Morganellaceae</taxon>
        <taxon>Proteus</taxon>
    </lineage>
</organism>
<name>NTRB_PROHU</name>
<sequence>METGNLPDNTLILDSLIHSVLVINQEFIICYANHAALQVLAQSRRKLFETPFTDLFSYHSFDAELMQETLANGQSFTDNEVILVIHNQSHTMSLSAQPISEQHILLELAPMDSQRRLSQEQIQQAQQIAARELVRGLAHEIKNPLGGLRGAAQLLAKSLPDPALTEYTQVIIEQADRLRTLVDRLLGPQHPGKKTHQSIHHVVERVAQLISLECPENVTLLKDYDPSLPELSHYPDQIEQVLLNITRNALQAVEKTGGTIILRTRTAFQITLHGERHRLVARIDVIDTGSGIPPHLQDTLFYPMVSGREDGNGLGLSIARNLVDQHAGKIEFTSWPGNTEFSIYLPIK</sequence>
<reference key="1">
    <citation type="journal article" date="1993" name="FEMS Microbiol. Lett.">
        <title>Cloning, heterologous expression, and sequencing of the Proteus vulgaris glnAntrBC operon and implications of nitrogen control on heterologous urease expression.</title>
        <authorList>
            <person name="Steglitz-Moersdorf U."/>
            <person name="Moersdorf G."/>
            <person name="Kaltwasser H."/>
        </authorList>
    </citation>
    <scope>NUCLEOTIDE SEQUENCE [GENOMIC DNA]</scope>
    <source>
        <strain>ATCC 13315 / DSM 30118 / JCM 1668 / NBRC 3851 / NCIMB 4175 / NCTC 4175 / NRRL B-3405</strain>
    </source>
</reference>
<keyword id="KW-0067">ATP-binding</keyword>
<keyword id="KW-0963">Cytoplasm</keyword>
<keyword id="KW-0378">Hydrolase</keyword>
<keyword id="KW-0418">Kinase</keyword>
<keyword id="KW-0535">Nitrogen fixation</keyword>
<keyword id="KW-0547">Nucleotide-binding</keyword>
<keyword id="KW-0597">Phosphoprotein</keyword>
<keyword id="KW-0808">Transferase</keyword>
<keyword id="KW-0902">Two-component regulatory system</keyword>
<comment type="function">
    <text evidence="2">Member of the two-component regulatory system NtrB/NtrC, which controls expression of the nitrogen-regulated (ntr) genes in response to nitrogen limitation. Under conditions of nitrogen limitation, NtrB autophosphorylates and transfers the phosphoryl group to NtrC. In the presence of nitrogen, acts as a phosphatase that dephosphorylates and inactivates NtrC.</text>
</comment>
<comment type="catalytic activity">
    <reaction evidence="2">
        <text>ATP + protein L-histidine = ADP + protein N-phospho-L-histidine.</text>
        <dbReference type="EC" id="2.7.13.3"/>
    </reaction>
</comment>
<comment type="subcellular location">
    <subcellularLocation>
        <location evidence="2">Cytoplasm</location>
    </subcellularLocation>
</comment>
<comment type="PTM">
    <text evidence="2">Autophosphorylated.</text>
</comment>
<gene>
    <name type="primary">ntrB</name>
</gene>